<accession>B3A0S0</accession>
<organism>
    <name type="scientific">Lottia gigantea</name>
    <name type="common">Giant owl limpet</name>
    <dbReference type="NCBI Taxonomy" id="225164"/>
    <lineage>
        <taxon>Eukaryota</taxon>
        <taxon>Metazoa</taxon>
        <taxon>Spiralia</taxon>
        <taxon>Lophotrochozoa</taxon>
        <taxon>Mollusca</taxon>
        <taxon>Gastropoda</taxon>
        <taxon>Patellogastropoda</taxon>
        <taxon>Lottioidea</taxon>
        <taxon>Lottiidae</taxon>
        <taxon>Lottia</taxon>
    </lineage>
</organism>
<dbReference type="EMBL" id="FC725607">
    <property type="status" value="NOT_ANNOTATED_CDS"/>
    <property type="molecule type" value="mRNA"/>
</dbReference>
<dbReference type="GO" id="GO:0005576">
    <property type="term" value="C:extracellular region"/>
    <property type="evidence" value="ECO:0007669"/>
    <property type="project" value="UniProtKB-SubCell"/>
</dbReference>
<keyword id="KW-0903">Direct protein sequencing</keyword>
<keyword id="KW-0325">Glycoprotein</keyword>
<keyword id="KW-0964">Secreted</keyword>
<keyword id="KW-0732">Signal</keyword>
<evidence type="ECO:0000255" key="1"/>
<evidence type="ECO:0000256" key="2">
    <source>
        <dbReference type="SAM" id="MobiDB-lite"/>
    </source>
</evidence>
<evidence type="ECO:0000269" key="3">
    <source>
    </source>
</evidence>
<evidence type="ECO:0000269" key="4">
    <source ref="1"/>
</evidence>
<evidence type="ECO:0000305" key="5"/>
<name>USP22_LOTGI</name>
<protein>
    <recommendedName>
        <fullName>Uncharacterized shell protein 22</fullName>
        <shortName>LUSP-22</shortName>
    </recommendedName>
</protein>
<feature type="signal peptide" evidence="1">
    <location>
        <begin position="1"/>
        <end position="20"/>
    </location>
</feature>
<feature type="chain" id="PRO_0000415237" description="Uncharacterized shell protein 22" evidence="1">
    <location>
        <begin position="21"/>
        <end position="195"/>
    </location>
</feature>
<feature type="region of interest" description="Disordered" evidence="2">
    <location>
        <begin position="26"/>
        <end position="195"/>
    </location>
</feature>
<feature type="compositionally biased region" description="Low complexity" evidence="2">
    <location>
        <begin position="29"/>
        <end position="43"/>
    </location>
</feature>
<feature type="compositionally biased region" description="Low complexity" evidence="2">
    <location>
        <begin position="74"/>
        <end position="104"/>
    </location>
</feature>
<feature type="compositionally biased region" description="Polar residues" evidence="2">
    <location>
        <begin position="112"/>
        <end position="123"/>
    </location>
</feature>
<feature type="compositionally biased region" description="Polar residues" evidence="2">
    <location>
        <begin position="151"/>
        <end position="176"/>
    </location>
</feature>
<feature type="glycosylation site" description="N-linked (GlcNAc...) asparagine" evidence="1">
    <location>
        <position position="28"/>
    </location>
</feature>
<feature type="non-terminal residue" evidence="5">
    <location>
        <position position="195"/>
    </location>
</feature>
<proteinExistence type="evidence at protein level"/>
<sequence length="195" mass="20987">MLKFRLILTVLTVLLITVNGQFGVNIENKSSTSSSKSAASKPSGNFAIPTALRRPNPFLQRLPSAAADQEALFQSKTAQAQPQPSAQSTNKPSFQNGQQSGGNQPMYPNQPDPYQTGSYQGPYNSMNSNNNNPPTMAGPVPADRISYQPAPKNTVQSGYQQPMPGQQSMQVPNNGPSLPAGPSYDLHNQYPPQQN</sequence>
<reference evidence="5" key="1">
    <citation type="submission" date="2007-12" db="EMBL/GenBank/DDBJ databases">
        <title>DOE Joint Genome Institute Lottia gigantea EST project.</title>
        <authorList>
            <person name="Richardson P."/>
            <person name="Lucas S."/>
            <person name="Rokhsar D."/>
            <person name="Wang M."/>
            <person name="Lindquist E.A."/>
        </authorList>
    </citation>
    <scope>NUCLEOTIDE SEQUENCE [LARGE SCALE MRNA]</scope>
    <scope>IDENTIFICATION</scope>
    <source>
        <tissue evidence="4">Embryo</tissue>
    </source>
</reference>
<reference key="2">
    <citation type="journal article" date="2013" name="FEBS J.">
        <title>The shell-forming proteome of Lottia gigantea reveals both deep conservations and lineage-specific novelties.</title>
        <authorList>
            <person name="Marie B."/>
            <person name="Jackson D.J."/>
            <person name="Ramos-Silva P."/>
            <person name="Zanella-Cleon I."/>
            <person name="Guichard N."/>
            <person name="Marin F."/>
        </authorList>
    </citation>
    <scope>PROTEIN SEQUENCE OF 62-76</scope>
    <scope>SUBCELLULAR LOCATION</scope>
    <scope>TISSUE SPECIFICITY</scope>
    <source>
        <tissue>Shell</tissue>
    </source>
</reference>
<comment type="subcellular location">
    <subcellularLocation>
        <location evidence="3">Secreted</location>
    </subcellularLocation>
</comment>
<comment type="tissue specificity">
    <text evidence="3">Component of the acid-soluble organic matrix of calcified layers of the shell (at protein level).</text>
</comment>